<reference key="1">
    <citation type="journal article" date="2006" name="Genome Biol.">
        <title>Genomic analysis reveals that Pseudomonas aeruginosa virulence is combinatorial.</title>
        <authorList>
            <person name="Lee D.G."/>
            <person name="Urbach J.M."/>
            <person name="Wu G."/>
            <person name="Liberati N.T."/>
            <person name="Feinbaum R.L."/>
            <person name="Miyata S."/>
            <person name="Diggins L.T."/>
            <person name="He J."/>
            <person name="Saucier M."/>
            <person name="Deziel E."/>
            <person name="Friedman L."/>
            <person name="Li L."/>
            <person name="Grills G."/>
            <person name="Montgomery K."/>
            <person name="Kucherlapati R."/>
            <person name="Rahme L.G."/>
            <person name="Ausubel F.M."/>
        </authorList>
    </citation>
    <scope>NUCLEOTIDE SEQUENCE [LARGE SCALE GENOMIC DNA]</scope>
    <source>
        <strain>UCBPP-PA14</strain>
    </source>
</reference>
<keyword id="KW-0520">NAD</keyword>
<keyword id="KW-0808">Transferase</keyword>
<evidence type="ECO:0000255" key="1">
    <source>
        <dbReference type="HAMAP-Rule" id="MF_00299"/>
    </source>
</evidence>
<accession>Q02V26</accession>
<proteinExistence type="inferred from homology"/>
<comment type="function">
    <text evidence="1">Removes the 2'-phosphate from RNA via an intermediate in which the phosphate is ADP-ribosylated by NAD followed by a presumed transesterification to release the RNA and generate ADP-ribose 1''-2''-cyclic phosphate (APPR&gt;P). May function as an ADP-ribosylase.</text>
</comment>
<comment type="similarity">
    <text evidence="1">Belongs to the KptA/TPT1 family.</text>
</comment>
<dbReference type="EC" id="2.7.1.-" evidence="1"/>
<dbReference type="EMBL" id="CP000438">
    <property type="protein sequence ID" value="ABJ15011.1"/>
    <property type="molecule type" value="Genomic_DNA"/>
</dbReference>
<dbReference type="RefSeq" id="WP_003136950.1">
    <property type="nucleotide sequence ID" value="NZ_CP034244.1"/>
</dbReference>
<dbReference type="SMR" id="Q02V26"/>
<dbReference type="KEGG" id="pau:PA14_00660"/>
<dbReference type="PseudoCAP" id="PA14_00660"/>
<dbReference type="HOGENOM" id="CLU_052998_4_0_6"/>
<dbReference type="BioCyc" id="PAER208963:G1G74-57-MONOMER"/>
<dbReference type="Proteomes" id="UP000000653">
    <property type="component" value="Chromosome"/>
</dbReference>
<dbReference type="GO" id="GO:0003950">
    <property type="term" value="F:NAD+ poly-ADP-ribosyltransferase activity"/>
    <property type="evidence" value="ECO:0007669"/>
    <property type="project" value="InterPro"/>
</dbReference>
<dbReference type="GO" id="GO:0000215">
    <property type="term" value="F:tRNA 2'-phosphotransferase activity"/>
    <property type="evidence" value="ECO:0007669"/>
    <property type="project" value="TreeGrafter"/>
</dbReference>
<dbReference type="GO" id="GO:0006388">
    <property type="term" value="P:tRNA splicing, via endonucleolytic cleavage and ligation"/>
    <property type="evidence" value="ECO:0007669"/>
    <property type="project" value="UniProtKB-UniRule"/>
</dbReference>
<dbReference type="Gene3D" id="3.20.170.30">
    <property type="match status" value="1"/>
</dbReference>
<dbReference type="Gene3D" id="1.10.10.970">
    <property type="entry name" value="RNA 2'-phosphotransferase, Tpt1/KptA family, N-terminal domain"/>
    <property type="match status" value="1"/>
</dbReference>
<dbReference type="HAMAP" id="MF_00299">
    <property type="entry name" value="KptA"/>
    <property type="match status" value="1"/>
</dbReference>
<dbReference type="InterPro" id="IPR002745">
    <property type="entry name" value="Ptrans_KptA/Tpt1"/>
</dbReference>
<dbReference type="InterPro" id="IPR042081">
    <property type="entry name" value="RNA_2'-PTrans_C"/>
</dbReference>
<dbReference type="InterPro" id="IPR022928">
    <property type="entry name" value="RNA_2'-PTrans_KptA"/>
</dbReference>
<dbReference type="InterPro" id="IPR042080">
    <property type="entry name" value="RNA_2'-PTrans_N"/>
</dbReference>
<dbReference type="NCBIfam" id="NF002012">
    <property type="entry name" value="PRK00819.1-1"/>
    <property type="match status" value="1"/>
</dbReference>
<dbReference type="NCBIfam" id="NF002014">
    <property type="entry name" value="PRK00819.1-4"/>
    <property type="match status" value="1"/>
</dbReference>
<dbReference type="PANTHER" id="PTHR12684">
    <property type="entry name" value="PUTATIVE PHOSPHOTRANSFERASE"/>
    <property type="match status" value="1"/>
</dbReference>
<dbReference type="PANTHER" id="PTHR12684:SF2">
    <property type="entry name" value="TRNA 2'-PHOSPHOTRANSFERASE 1"/>
    <property type="match status" value="1"/>
</dbReference>
<dbReference type="Pfam" id="PF01885">
    <property type="entry name" value="PTS_2-RNA"/>
    <property type="match status" value="1"/>
</dbReference>
<dbReference type="SUPFAM" id="SSF56399">
    <property type="entry name" value="ADP-ribosylation"/>
    <property type="match status" value="1"/>
</dbReference>
<feature type="chain" id="PRO_1000022018" description="Probable RNA 2'-phosphotransferase">
    <location>
        <begin position="1"/>
        <end position="182"/>
    </location>
</feature>
<gene>
    <name evidence="1" type="primary">kptA</name>
    <name type="ordered locus">PA14_00660</name>
</gene>
<protein>
    <recommendedName>
        <fullName evidence="1">Probable RNA 2'-phosphotransferase</fullName>
        <ecNumber evidence="1">2.7.1.-</ecNumber>
    </recommendedName>
</protein>
<organism>
    <name type="scientific">Pseudomonas aeruginosa (strain UCBPP-PA14)</name>
    <dbReference type="NCBI Taxonomy" id="208963"/>
    <lineage>
        <taxon>Bacteria</taxon>
        <taxon>Pseudomonadati</taxon>
        <taxon>Pseudomonadota</taxon>
        <taxon>Gammaproteobacteria</taxon>
        <taxon>Pseudomonadales</taxon>
        <taxon>Pseudomonadaceae</taxon>
        <taxon>Pseudomonas</taxon>
    </lineage>
</organism>
<name>KPTA_PSEAB</name>
<sequence>MDRKTLDDTSKFLSYVLRHQPEAIGLKLDGEGWADIDALIAGAARDGRALDRALLGAVVENNDKKRFALSADGQRIRAVQGHSHAAVAIAYAPAVPPAVLYHGTASRFLDSIRERGLVPGSRHHVHLSARRATALEVGRRYGSPVLLEIDARDMHLAGHLFHQAENGVWLTERVPVRFIREA</sequence>